<comment type="function">
    <text evidence="2">Catalyzes the transfer of a methyl group from dimethylamine to the corrinoid cofactor of MtbC.</text>
</comment>
<comment type="catalytic activity">
    <reaction evidence="2">
        <text>Co(I)-[dimethylamine-specific corrinoid protein] + dimethylamine + H(+) = methyl-Co(III)-[dimethylamine-specific corrinoid protein] + methylamine</text>
        <dbReference type="Rhea" id="RHEA:41175"/>
        <dbReference type="Rhea" id="RHEA-COMP:11122"/>
        <dbReference type="Rhea" id="RHEA-COMP:11123"/>
        <dbReference type="ChEBI" id="CHEBI:15378"/>
        <dbReference type="ChEBI" id="CHEBI:58040"/>
        <dbReference type="ChEBI" id="CHEBI:59338"/>
        <dbReference type="ChEBI" id="CHEBI:85033"/>
        <dbReference type="ChEBI" id="CHEBI:85035"/>
        <dbReference type="EC" id="2.1.1.249"/>
    </reaction>
</comment>
<comment type="biophysicochemical properties">
    <kinetics>
        <KM evidence="2">0.45 mM for dimethylamine</KM>
        <KM evidence="2">4.5 mM for monomethylamine</KM>
    </kinetics>
</comment>
<comment type="pathway">
    <text>One-carbon metabolism; methanogenesis from dimethylamine.</text>
</comment>
<comment type="similarity">
    <text evidence="3">Belongs to the dimethylamine methyltransferase family.</text>
</comment>
<keyword id="KW-0903">Direct protein sequencing</keyword>
<keyword id="KW-0484">Methanogenesis</keyword>
<keyword id="KW-0489">Methyltransferase</keyword>
<keyword id="KW-0669">Pyrrolysine</keyword>
<keyword id="KW-0808">Transferase</keyword>
<dbReference type="EC" id="2.1.1.249"/>
<dbReference type="EMBL" id="CP000099">
    <property type="status" value="NOT_ANNOTATED_CDS"/>
    <property type="molecule type" value="Genomic_DNA"/>
</dbReference>
<dbReference type="UniPathway" id="UPA00644"/>
<dbReference type="GO" id="GO:0043791">
    <property type="term" value="F:dimethylamine methyltransferase activity"/>
    <property type="evidence" value="ECO:0007669"/>
    <property type="project" value="UniProtKB-EC"/>
</dbReference>
<dbReference type="GO" id="GO:0015948">
    <property type="term" value="P:methanogenesis"/>
    <property type="evidence" value="ECO:0007669"/>
    <property type="project" value="UniProtKB-KW"/>
</dbReference>
<dbReference type="GO" id="GO:0032259">
    <property type="term" value="P:methylation"/>
    <property type="evidence" value="ECO:0007669"/>
    <property type="project" value="UniProtKB-KW"/>
</dbReference>
<dbReference type="InterPro" id="IPR012653">
    <property type="entry name" value="Dimeth_MeTrfase_MtbB"/>
</dbReference>
<dbReference type="NCBIfam" id="TIGR02368">
    <property type="entry name" value="dimeth_PyL"/>
    <property type="match status" value="1"/>
</dbReference>
<dbReference type="Pfam" id="PF09505">
    <property type="entry name" value="Dimeth_Pyl"/>
    <property type="match status" value="1"/>
</dbReference>
<accession>P0C0W6</accession>
<name>MTBB2_METBF</name>
<gene>
    <name type="primary">mtbB2</name>
    <name type="ordered locus">Mbar_A3605</name>
</gene>
<evidence type="ECO:0000250" key="1"/>
<evidence type="ECO:0000269" key="2">
    <source>
    </source>
</evidence>
<evidence type="ECO:0000305" key="3"/>
<reference key="1">
    <citation type="journal article" date="2006" name="J. Bacteriol.">
        <title>The Methanosarcina barkeri genome: comparative analysis with Methanosarcina acetivorans and Methanosarcina mazei reveals extensive rearrangement within methanosarcinal genomes.</title>
        <authorList>
            <person name="Maeder D.L."/>
            <person name="Anderson I."/>
            <person name="Brettin T.S."/>
            <person name="Bruce D.C."/>
            <person name="Gilna P."/>
            <person name="Han C.S."/>
            <person name="Lapidus A."/>
            <person name="Metcalf W.W."/>
            <person name="Saunders E."/>
            <person name="Tapia R."/>
            <person name="Sowers K.R."/>
        </authorList>
    </citation>
    <scope>NUCLEOTIDE SEQUENCE [LARGE SCALE GENOMIC DNA]</scope>
    <source>
        <strain>Fusaro / DSM 804</strain>
    </source>
</reference>
<reference key="2">
    <citation type="journal article" date="1998" name="Eur. J. Biochem.">
        <title>Purification and characterization of dimethylamine:5-hydroxybenzimidazolylcobamide methyltransferase from Methanosarcina barkeri Fusaro.</title>
        <authorList>
            <person name="Wassenaar R.W."/>
            <person name="Keltjens J.T."/>
            <person name="van der Drift C."/>
            <person name="Vogels G.D."/>
        </authorList>
    </citation>
    <scope>PROTEIN SEQUENCE OF 2-17</scope>
    <scope>FUNCTION</scope>
    <scope>CATALYTIC ACTIVITY</scope>
    <scope>BIOPHYSICOCHEMICAL PROPERTIES</scope>
    <source>
        <strain>Fusaro / DSM 804</strain>
    </source>
</reference>
<protein>
    <recommendedName>
        <fullName>Dimethylamine methyltransferase MtbB2</fullName>
        <shortName>DMA methyltransferase 2</shortName>
        <shortName>DMAMT 2</shortName>
        <ecNumber>2.1.1.249</ecNumber>
    </recommendedName>
    <alternativeName>
        <fullName>Dimethylamine--corrinoid protein methyltransferase 2</fullName>
    </alternativeName>
</protein>
<feature type="initiator methionine" description="Removed" evidence="2">
    <location>
        <position position="1"/>
    </location>
</feature>
<feature type="chain" id="PRO_0000216562" description="Dimethylamine methyltransferase MtbB2">
    <location>
        <begin position="2"/>
        <end position="467"/>
    </location>
</feature>
<feature type="non-standard amino acid" description="Pyrrolysine" evidence="1">
    <location>
        <position position="356"/>
    </location>
</feature>
<feature type="sequence conflict" description="In Ref. 2; AA sequence." evidence="3" ref="2">
    <original>VF</original>
    <variation>IK</variation>
    <location>
        <begin position="15"/>
        <end position="16"/>
    </location>
</feature>
<organism>
    <name type="scientific">Methanosarcina barkeri (strain Fusaro / DSM 804)</name>
    <dbReference type="NCBI Taxonomy" id="269797"/>
    <lineage>
        <taxon>Archaea</taxon>
        <taxon>Methanobacteriati</taxon>
        <taxon>Methanobacteriota</taxon>
        <taxon>Stenosarchaea group</taxon>
        <taxon>Methanomicrobia</taxon>
        <taxon>Methanosarcinales</taxon>
        <taxon>Methanosarcinaceae</taxon>
        <taxon>Methanosarcina</taxon>
    </lineage>
</organism>
<sequence>MATEYALRMGDGKRVFLTKEKIMAEIEAGTANAADLGDIPALNDNEMDKLAEILMMPGKTVSVEQGMEIPVTHDIGTIRLDGDQGNSGVGIPSSRLVGCMMHERAFGADTMELGHIDYSFKPVKPVVSNECQAMEVCQQNMIIPLFYGAMPNMGLYYTPDGPFENPGDLMKLFKIDKAKESMEHAAEHLTRDTVWVMQKLFASGADGVNFDTTGAAGDGDMYGTLYAIQALRKEFPDMYIEAGMAGEMVLGMHGELEYDGVRLAGSWPHEQAPLIAKAGANVFGPVCNTNTSKTSAWNLARAVTFIKAAVEASPIPCHVNMGMGVGGIPMLETPPIDAVTRASKAMVEIAGVDGIOIGVGDPMGMPISHIMASGMTGIRAAGDLVARMEFSKNMRIGEAKEYVAKKLGVDKMDLVDEHVMRELREELDIGIITSVPGAAKGIAAKMNIEKLLDIKINSCNLFRKQIA</sequence>
<proteinExistence type="evidence at protein level"/>